<keyword id="KW-0687">Ribonucleoprotein</keyword>
<keyword id="KW-0689">Ribosomal protein</keyword>
<keyword id="KW-0694">RNA-binding</keyword>
<keyword id="KW-0699">rRNA-binding</keyword>
<evidence type="ECO:0000255" key="1">
    <source>
        <dbReference type="HAMAP-Rule" id="MF_01365"/>
    </source>
</evidence>
<evidence type="ECO:0000305" key="2"/>
<accession>C3KVN6</accession>
<name>RL6_CLOB6</name>
<protein>
    <recommendedName>
        <fullName evidence="1">Large ribosomal subunit protein uL6</fullName>
    </recommendedName>
    <alternativeName>
        <fullName evidence="2">50S ribosomal protein L6</fullName>
    </alternativeName>
</protein>
<proteinExistence type="inferred from homology"/>
<dbReference type="EMBL" id="CP001083">
    <property type="protein sequence ID" value="ACQ51626.1"/>
    <property type="molecule type" value="Genomic_DNA"/>
</dbReference>
<dbReference type="RefSeq" id="WP_003360202.1">
    <property type="nucleotide sequence ID" value="NC_012658.1"/>
</dbReference>
<dbReference type="SMR" id="C3KVN6"/>
<dbReference type="KEGG" id="cbi:CLJ_B3774"/>
<dbReference type="HOGENOM" id="CLU_065464_1_2_9"/>
<dbReference type="Proteomes" id="UP000002333">
    <property type="component" value="Chromosome"/>
</dbReference>
<dbReference type="GO" id="GO:0022625">
    <property type="term" value="C:cytosolic large ribosomal subunit"/>
    <property type="evidence" value="ECO:0007669"/>
    <property type="project" value="TreeGrafter"/>
</dbReference>
<dbReference type="GO" id="GO:0019843">
    <property type="term" value="F:rRNA binding"/>
    <property type="evidence" value="ECO:0007669"/>
    <property type="project" value="UniProtKB-UniRule"/>
</dbReference>
<dbReference type="GO" id="GO:0003735">
    <property type="term" value="F:structural constituent of ribosome"/>
    <property type="evidence" value="ECO:0007669"/>
    <property type="project" value="InterPro"/>
</dbReference>
<dbReference type="GO" id="GO:0002181">
    <property type="term" value="P:cytoplasmic translation"/>
    <property type="evidence" value="ECO:0007669"/>
    <property type="project" value="TreeGrafter"/>
</dbReference>
<dbReference type="FunFam" id="3.90.930.12:FF:000001">
    <property type="entry name" value="50S ribosomal protein L6"/>
    <property type="match status" value="1"/>
</dbReference>
<dbReference type="FunFam" id="3.90.930.12:FF:000002">
    <property type="entry name" value="50S ribosomal protein L6"/>
    <property type="match status" value="1"/>
</dbReference>
<dbReference type="Gene3D" id="3.90.930.12">
    <property type="entry name" value="Ribosomal protein L6, alpha-beta domain"/>
    <property type="match status" value="2"/>
</dbReference>
<dbReference type="HAMAP" id="MF_01365_B">
    <property type="entry name" value="Ribosomal_uL6_B"/>
    <property type="match status" value="1"/>
</dbReference>
<dbReference type="InterPro" id="IPR000702">
    <property type="entry name" value="Ribosomal_uL6-like"/>
</dbReference>
<dbReference type="InterPro" id="IPR036789">
    <property type="entry name" value="Ribosomal_uL6-like_a/b-dom_sf"/>
</dbReference>
<dbReference type="InterPro" id="IPR020040">
    <property type="entry name" value="Ribosomal_uL6_a/b-dom"/>
</dbReference>
<dbReference type="InterPro" id="IPR019906">
    <property type="entry name" value="Ribosomal_uL6_bac-type"/>
</dbReference>
<dbReference type="InterPro" id="IPR002358">
    <property type="entry name" value="Ribosomal_uL6_CS"/>
</dbReference>
<dbReference type="NCBIfam" id="TIGR03654">
    <property type="entry name" value="L6_bact"/>
    <property type="match status" value="1"/>
</dbReference>
<dbReference type="PANTHER" id="PTHR11655">
    <property type="entry name" value="60S/50S RIBOSOMAL PROTEIN L6/L9"/>
    <property type="match status" value="1"/>
</dbReference>
<dbReference type="PANTHER" id="PTHR11655:SF14">
    <property type="entry name" value="LARGE RIBOSOMAL SUBUNIT PROTEIN UL6M"/>
    <property type="match status" value="1"/>
</dbReference>
<dbReference type="Pfam" id="PF00347">
    <property type="entry name" value="Ribosomal_L6"/>
    <property type="match status" value="2"/>
</dbReference>
<dbReference type="PIRSF" id="PIRSF002162">
    <property type="entry name" value="Ribosomal_L6"/>
    <property type="match status" value="1"/>
</dbReference>
<dbReference type="PRINTS" id="PR00059">
    <property type="entry name" value="RIBOSOMALL6"/>
</dbReference>
<dbReference type="SUPFAM" id="SSF56053">
    <property type="entry name" value="Ribosomal protein L6"/>
    <property type="match status" value="2"/>
</dbReference>
<dbReference type="PROSITE" id="PS00525">
    <property type="entry name" value="RIBOSOMAL_L6_1"/>
    <property type="match status" value="1"/>
</dbReference>
<organism>
    <name type="scientific">Clostridium botulinum (strain 657 / Type Ba4)</name>
    <dbReference type="NCBI Taxonomy" id="515621"/>
    <lineage>
        <taxon>Bacteria</taxon>
        <taxon>Bacillati</taxon>
        <taxon>Bacillota</taxon>
        <taxon>Clostridia</taxon>
        <taxon>Eubacteriales</taxon>
        <taxon>Clostridiaceae</taxon>
        <taxon>Clostridium</taxon>
    </lineage>
</organism>
<sequence length="180" mass="19555">MSRVGKLPVAIPNGVTVTVTPDNVVTVKGPKGELVKAMSNKINIAVEDNSVVVTRDNDHKDVRALHGLTRALINNMVTGVNEGYIKTLELIGVGYRAQLQGKKLVLSLGFSHPVEMEAVSGVEFEVEGGTKVKVKGIDKELVGAVAADIRKWRKPEPYKGKGIKYENEVIRRKEGKTGKK</sequence>
<reference key="1">
    <citation type="submission" date="2008-05" db="EMBL/GenBank/DDBJ databases">
        <title>Genome sequence of Clostridium botulinum Ba4 strain 657.</title>
        <authorList>
            <person name="Shrivastava S."/>
            <person name="Brown J.L."/>
            <person name="Bruce D."/>
            <person name="Detter C."/>
            <person name="Munk C."/>
            <person name="Smith L.A."/>
            <person name="Smith T.J."/>
            <person name="Sutton G."/>
            <person name="Brettin T.S."/>
        </authorList>
    </citation>
    <scope>NUCLEOTIDE SEQUENCE [LARGE SCALE GENOMIC DNA]</scope>
    <source>
        <strain>657 / Type Ba4</strain>
    </source>
</reference>
<comment type="function">
    <text evidence="1">This protein binds to the 23S rRNA, and is important in its secondary structure. It is located near the subunit interface in the base of the L7/L12 stalk, and near the tRNA binding site of the peptidyltransferase center.</text>
</comment>
<comment type="subunit">
    <text evidence="1">Part of the 50S ribosomal subunit.</text>
</comment>
<comment type="similarity">
    <text evidence="1">Belongs to the universal ribosomal protein uL6 family.</text>
</comment>
<gene>
    <name evidence="1" type="primary">rplF</name>
    <name type="ordered locus">CLJ_B3774</name>
</gene>
<feature type="chain" id="PRO_1000214919" description="Large ribosomal subunit protein uL6">
    <location>
        <begin position="1"/>
        <end position="180"/>
    </location>
</feature>